<keyword id="KW-0066">ATP synthesis</keyword>
<keyword id="KW-0067">ATP-binding</keyword>
<keyword id="KW-1003">Cell membrane</keyword>
<keyword id="KW-0139">CF(1)</keyword>
<keyword id="KW-0375">Hydrogen ion transport</keyword>
<keyword id="KW-0406">Ion transport</keyword>
<keyword id="KW-0472">Membrane</keyword>
<keyword id="KW-0547">Nucleotide-binding</keyword>
<keyword id="KW-1278">Translocase</keyword>
<keyword id="KW-0813">Transport</keyword>
<name>ATPA_BACC4</name>
<evidence type="ECO:0000255" key="1">
    <source>
        <dbReference type="HAMAP-Rule" id="MF_01346"/>
    </source>
</evidence>
<evidence type="ECO:0000256" key="2">
    <source>
        <dbReference type="SAM" id="MobiDB-lite"/>
    </source>
</evidence>
<accession>B7HFK4</accession>
<organism>
    <name type="scientific">Bacillus cereus (strain B4264)</name>
    <dbReference type="NCBI Taxonomy" id="405532"/>
    <lineage>
        <taxon>Bacteria</taxon>
        <taxon>Bacillati</taxon>
        <taxon>Bacillota</taxon>
        <taxon>Bacilli</taxon>
        <taxon>Bacillales</taxon>
        <taxon>Bacillaceae</taxon>
        <taxon>Bacillus</taxon>
        <taxon>Bacillus cereus group</taxon>
    </lineage>
</organism>
<reference key="1">
    <citation type="submission" date="2008-10" db="EMBL/GenBank/DDBJ databases">
        <title>Genome sequence of Bacillus cereus B4264.</title>
        <authorList>
            <person name="Dodson R.J."/>
            <person name="Durkin A.S."/>
            <person name="Rosovitz M.J."/>
            <person name="Rasko D.A."/>
            <person name="Hoffmaster A."/>
            <person name="Ravel J."/>
            <person name="Sutton G."/>
        </authorList>
    </citation>
    <scope>NUCLEOTIDE SEQUENCE [LARGE SCALE GENOMIC DNA]</scope>
    <source>
        <strain>B4264</strain>
    </source>
</reference>
<sequence>MSIRAEEISALIKQQIENYQSEIEVSDVGTVIQVGDGIARAHGLDNVMAGELVEFSNGVMGLAQNLEENNVGIIILGPYTEIREGDEVRRTGRIMQVPVGKELIGRVVNPLGQPVDGLGPINTTNTRPIESPAPGVMDRKSVHEPLQTGIKAIDALVPIGRGQRELIIGDRQTGKTAVALDTIINQKDEDMICIYVAIGQKESTVRNVVETLRKHGALDYTIVVTASASQPAPLLYLAPYAGVTMGEEFMYNGKHVLVVYDDLSKQAAAYRELSLLLRRPPGREAYPGDVFYLHSRLLERAAKLSDAKGGGSLTALPFIETQAGDVSAYIPTNVISITDGQIFLQSDLFFSGVRPAIDAGTSVSRVGGSAQIKAMSKVSGTLRLDLASYRELEAFAQFGSDLDKATQAKLNRGARTVEVLKQGLHKPLRVEKQVIILYALTRGFLDDIPVVDITRFEEEFHAWLDSNATDLLEEIRTTKKLADDDKFAAAINGFKKVFVASE</sequence>
<dbReference type="EC" id="7.1.2.2" evidence="1"/>
<dbReference type="EMBL" id="CP001176">
    <property type="protein sequence ID" value="ACK62355.1"/>
    <property type="molecule type" value="Genomic_DNA"/>
</dbReference>
<dbReference type="RefSeq" id="WP_000027512.1">
    <property type="nucleotide sequence ID" value="NC_011725.1"/>
</dbReference>
<dbReference type="SMR" id="B7HFK4"/>
<dbReference type="KEGG" id="bcb:BCB4264_A5429"/>
<dbReference type="HOGENOM" id="CLU_010091_2_1_9"/>
<dbReference type="Proteomes" id="UP000007096">
    <property type="component" value="Chromosome"/>
</dbReference>
<dbReference type="GO" id="GO:0005886">
    <property type="term" value="C:plasma membrane"/>
    <property type="evidence" value="ECO:0007669"/>
    <property type="project" value="UniProtKB-SubCell"/>
</dbReference>
<dbReference type="GO" id="GO:0045259">
    <property type="term" value="C:proton-transporting ATP synthase complex"/>
    <property type="evidence" value="ECO:0007669"/>
    <property type="project" value="UniProtKB-KW"/>
</dbReference>
<dbReference type="GO" id="GO:0043531">
    <property type="term" value="F:ADP binding"/>
    <property type="evidence" value="ECO:0007669"/>
    <property type="project" value="TreeGrafter"/>
</dbReference>
<dbReference type="GO" id="GO:0005524">
    <property type="term" value="F:ATP binding"/>
    <property type="evidence" value="ECO:0007669"/>
    <property type="project" value="UniProtKB-UniRule"/>
</dbReference>
<dbReference type="GO" id="GO:0046933">
    <property type="term" value="F:proton-transporting ATP synthase activity, rotational mechanism"/>
    <property type="evidence" value="ECO:0007669"/>
    <property type="project" value="UniProtKB-UniRule"/>
</dbReference>
<dbReference type="CDD" id="cd18113">
    <property type="entry name" value="ATP-synt_F1_alpha_C"/>
    <property type="match status" value="1"/>
</dbReference>
<dbReference type="CDD" id="cd18116">
    <property type="entry name" value="ATP-synt_F1_alpha_N"/>
    <property type="match status" value="1"/>
</dbReference>
<dbReference type="CDD" id="cd01132">
    <property type="entry name" value="F1-ATPase_alpha_CD"/>
    <property type="match status" value="1"/>
</dbReference>
<dbReference type="FunFam" id="1.20.150.20:FF:000001">
    <property type="entry name" value="ATP synthase subunit alpha"/>
    <property type="match status" value="1"/>
</dbReference>
<dbReference type="FunFam" id="2.40.30.20:FF:000001">
    <property type="entry name" value="ATP synthase subunit alpha"/>
    <property type="match status" value="1"/>
</dbReference>
<dbReference type="FunFam" id="3.40.50.300:FF:000002">
    <property type="entry name" value="ATP synthase subunit alpha"/>
    <property type="match status" value="1"/>
</dbReference>
<dbReference type="Gene3D" id="2.40.30.20">
    <property type="match status" value="1"/>
</dbReference>
<dbReference type="Gene3D" id="1.20.150.20">
    <property type="entry name" value="ATP synthase alpha/beta chain, C-terminal domain"/>
    <property type="match status" value="1"/>
</dbReference>
<dbReference type="Gene3D" id="3.40.50.300">
    <property type="entry name" value="P-loop containing nucleotide triphosphate hydrolases"/>
    <property type="match status" value="1"/>
</dbReference>
<dbReference type="HAMAP" id="MF_01346">
    <property type="entry name" value="ATP_synth_alpha_bact"/>
    <property type="match status" value="1"/>
</dbReference>
<dbReference type="InterPro" id="IPR023366">
    <property type="entry name" value="ATP_synth_asu-like_sf"/>
</dbReference>
<dbReference type="InterPro" id="IPR000793">
    <property type="entry name" value="ATP_synth_asu_C"/>
</dbReference>
<dbReference type="InterPro" id="IPR038376">
    <property type="entry name" value="ATP_synth_asu_C_sf"/>
</dbReference>
<dbReference type="InterPro" id="IPR033732">
    <property type="entry name" value="ATP_synth_F1_a_nt-bd_dom"/>
</dbReference>
<dbReference type="InterPro" id="IPR005294">
    <property type="entry name" value="ATP_synth_F1_asu"/>
</dbReference>
<dbReference type="InterPro" id="IPR020003">
    <property type="entry name" value="ATPase_a/bsu_AS"/>
</dbReference>
<dbReference type="InterPro" id="IPR004100">
    <property type="entry name" value="ATPase_F1/V1/A1_a/bsu_N"/>
</dbReference>
<dbReference type="InterPro" id="IPR036121">
    <property type="entry name" value="ATPase_F1/V1/A1_a/bsu_N_sf"/>
</dbReference>
<dbReference type="InterPro" id="IPR000194">
    <property type="entry name" value="ATPase_F1/V1/A1_a/bsu_nucl-bd"/>
</dbReference>
<dbReference type="InterPro" id="IPR027417">
    <property type="entry name" value="P-loop_NTPase"/>
</dbReference>
<dbReference type="NCBIfam" id="TIGR00962">
    <property type="entry name" value="atpA"/>
    <property type="match status" value="1"/>
</dbReference>
<dbReference type="NCBIfam" id="NF009884">
    <property type="entry name" value="PRK13343.1"/>
    <property type="match status" value="1"/>
</dbReference>
<dbReference type="PANTHER" id="PTHR48082">
    <property type="entry name" value="ATP SYNTHASE SUBUNIT ALPHA, MITOCHONDRIAL"/>
    <property type="match status" value="1"/>
</dbReference>
<dbReference type="PANTHER" id="PTHR48082:SF2">
    <property type="entry name" value="ATP SYNTHASE SUBUNIT ALPHA, MITOCHONDRIAL"/>
    <property type="match status" value="1"/>
</dbReference>
<dbReference type="Pfam" id="PF00006">
    <property type="entry name" value="ATP-synt_ab"/>
    <property type="match status" value="1"/>
</dbReference>
<dbReference type="Pfam" id="PF00306">
    <property type="entry name" value="ATP-synt_ab_C"/>
    <property type="match status" value="1"/>
</dbReference>
<dbReference type="Pfam" id="PF02874">
    <property type="entry name" value="ATP-synt_ab_N"/>
    <property type="match status" value="1"/>
</dbReference>
<dbReference type="PIRSF" id="PIRSF039088">
    <property type="entry name" value="F_ATPase_subunit_alpha"/>
    <property type="match status" value="1"/>
</dbReference>
<dbReference type="SUPFAM" id="SSF47917">
    <property type="entry name" value="C-terminal domain of alpha and beta subunits of F1 ATP synthase"/>
    <property type="match status" value="1"/>
</dbReference>
<dbReference type="SUPFAM" id="SSF50615">
    <property type="entry name" value="N-terminal domain of alpha and beta subunits of F1 ATP synthase"/>
    <property type="match status" value="1"/>
</dbReference>
<dbReference type="SUPFAM" id="SSF52540">
    <property type="entry name" value="P-loop containing nucleoside triphosphate hydrolases"/>
    <property type="match status" value="1"/>
</dbReference>
<dbReference type="PROSITE" id="PS00152">
    <property type="entry name" value="ATPASE_ALPHA_BETA"/>
    <property type="match status" value="1"/>
</dbReference>
<gene>
    <name evidence="1" type="primary">atpA</name>
    <name type="ordered locus">BCB4264_A5429</name>
</gene>
<protein>
    <recommendedName>
        <fullName evidence="1">ATP synthase subunit alpha</fullName>
        <ecNumber evidence="1">7.1.2.2</ecNumber>
    </recommendedName>
    <alternativeName>
        <fullName evidence="1">ATP synthase F1 sector subunit alpha</fullName>
    </alternativeName>
    <alternativeName>
        <fullName evidence="1">F-ATPase subunit alpha</fullName>
    </alternativeName>
</protein>
<proteinExistence type="inferred from homology"/>
<feature type="chain" id="PRO_1000143343" description="ATP synthase subunit alpha">
    <location>
        <begin position="1"/>
        <end position="502"/>
    </location>
</feature>
<feature type="region of interest" description="Disordered" evidence="2">
    <location>
        <begin position="115"/>
        <end position="135"/>
    </location>
</feature>
<feature type="binding site" evidence="1">
    <location>
        <begin position="169"/>
        <end position="176"/>
    </location>
    <ligand>
        <name>ATP</name>
        <dbReference type="ChEBI" id="CHEBI:30616"/>
    </ligand>
</feature>
<feature type="site" description="Required for activity" evidence="1">
    <location>
        <position position="362"/>
    </location>
</feature>
<comment type="function">
    <text evidence="1">Produces ATP from ADP in the presence of a proton gradient across the membrane. The alpha chain is a regulatory subunit.</text>
</comment>
<comment type="catalytic activity">
    <reaction evidence="1">
        <text>ATP + H2O + 4 H(+)(in) = ADP + phosphate + 5 H(+)(out)</text>
        <dbReference type="Rhea" id="RHEA:57720"/>
        <dbReference type="ChEBI" id="CHEBI:15377"/>
        <dbReference type="ChEBI" id="CHEBI:15378"/>
        <dbReference type="ChEBI" id="CHEBI:30616"/>
        <dbReference type="ChEBI" id="CHEBI:43474"/>
        <dbReference type="ChEBI" id="CHEBI:456216"/>
        <dbReference type="EC" id="7.1.2.2"/>
    </reaction>
</comment>
<comment type="subunit">
    <text evidence="1">F-type ATPases have 2 components, CF(1) - the catalytic core - and CF(0) - the membrane proton channel. CF(1) has five subunits: alpha(3), beta(3), gamma(1), delta(1), epsilon(1). CF(0) has three main subunits: a(1), b(2) and c(9-12). The alpha and beta chains form an alternating ring which encloses part of the gamma chain. CF(1) is attached to CF(0) by a central stalk formed by the gamma and epsilon chains, while a peripheral stalk is formed by the delta and b chains.</text>
</comment>
<comment type="subcellular location">
    <subcellularLocation>
        <location evidence="1">Cell membrane</location>
        <topology evidence="1">Peripheral membrane protein</topology>
    </subcellularLocation>
</comment>
<comment type="similarity">
    <text evidence="1">Belongs to the ATPase alpha/beta chains family.</text>
</comment>